<sequence>MGAAAWARPLSVSFLLLLLPLPGMPAGSWDPAGYLLYCPCMGRFGNQADHFLGSLAFAKLLNRTLAVPPWIEYQHHKPPFTNLHVSYQKYFKLEPLQAYHRVISLEDFMEKLAPTHWPPEKRVAYCFEVAAQRSPDKKTCPMKEGNPFGPFWDQFHVSFNKSELFTGISFSASYREQWSQRFSPKEHPVLALPGAPAQFPVLEEHRPLQKYMVWSDEMVKTGEAQIHAHLVRPYVGIHLRIGSDWKNACAMLKDGTAGSHFMASPQCVGYSRSTAAPLTMTMCLPDLKEIQRAVKLWVRSLDAQSVYVATDSESYVPELQQLFKGKVKVVSLKPEVAQVDLYILGQADHFIGNCVSSFTAFVKRERDLQGRPSSFFGMDRPPKLRDEF</sequence>
<protein>
    <recommendedName>
        <fullName>GDP-fucose protein O-fucosyltransferase 1</fullName>
        <ecNumber evidence="3">2.4.1.221</ecNumber>
    </recommendedName>
    <alternativeName>
        <fullName>Peptide-O-fucosyltransferase 1</fullName>
        <shortName>O-FucT-1</shortName>
    </alternativeName>
</protein>
<accession>Q6EV69</accession>
<proteinExistence type="evidence at transcript level"/>
<gene>
    <name type="primary">POFUT1</name>
    <name type="synonym">FUT12</name>
</gene>
<dbReference type="EC" id="2.4.1.221" evidence="3"/>
<dbReference type="EMBL" id="AJ781500">
    <property type="protein sequence ID" value="CAH03712.1"/>
    <property type="molecule type" value="mRNA"/>
</dbReference>
<dbReference type="RefSeq" id="NP_001008982.1">
    <property type="nucleotide sequence ID" value="NM_001008982.1"/>
</dbReference>
<dbReference type="SMR" id="Q6EV69"/>
<dbReference type="FunCoup" id="Q6EV69">
    <property type="interactions" value="2211"/>
</dbReference>
<dbReference type="STRING" id="9598.ENSPTRP00000022931"/>
<dbReference type="CAZy" id="GT65">
    <property type="family name" value="Glycosyltransferase Family 65"/>
</dbReference>
<dbReference type="GlyCosmos" id="Q6EV69">
    <property type="glycosylation" value="2 sites, No reported glycans"/>
</dbReference>
<dbReference type="PaxDb" id="9598-ENSPTRP00000022931"/>
<dbReference type="Ensembl" id="ENSPTRT00000024842.3">
    <property type="protein sequence ID" value="ENSPTRP00000022931.2"/>
    <property type="gene ID" value="ENSPTRG00000013375.5"/>
</dbReference>
<dbReference type="GeneID" id="449504"/>
<dbReference type="KEGG" id="ptr:449504"/>
<dbReference type="CTD" id="23509"/>
<dbReference type="VGNC" id="VGNC:14278">
    <property type="gene designation" value="POFUT1"/>
</dbReference>
<dbReference type="eggNOG" id="KOG3849">
    <property type="taxonomic scope" value="Eukaryota"/>
</dbReference>
<dbReference type="GeneTree" id="ENSGT00390000015634"/>
<dbReference type="HOGENOM" id="CLU_039551_0_0_1"/>
<dbReference type="InParanoid" id="Q6EV69"/>
<dbReference type="OMA" id="WQNACRL"/>
<dbReference type="OrthoDB" id="1652at9604"/>
<dbReference type="TreeFam" id="TF314805"/>
<dbReference type="UniPathway" id="UPA00378"/>
<dbReference type="Proteomes" id="UP000002277">
    <property type="component" value="Chromosome 20"/>
</dbReference>
<dbReference type="Bgee" id="ENSPTRG00000013375">
    <property type="expression patterns" value="Expressed in fibroblast and 22 other cell types or tissues"/>
</dbReference>
<dbReference type="GO" id="GO:0005783">
    <property type="term" value="C:endoplasmic reticulum"/>
    <property type="evidence" value="ECO:0000318"/>
    <property type="project" value="GO_Central"/>
</dbReference>
<dbReference type="GO" id="GO:0016020">
    <property type="term" value="C:membrane"/>
    <property type="evidence" value="ECO:0000250"/>
    <property type="project" value="UniProtKB"/>
</dbReference>
<dbReference type="GO" id="GO:0046922">
    <property type="term" value="F:peptide-O-fucosyltransferase activity"/>
    <property type="evidence" value="ECO:0000250"/>
    <property type="project" value="UniProtKB"/>
</dbReference>
<dbReference type="GO" id="GO:0001525">
    <property type="term" value="P:angiogenesis"/>
    <property type="evidence" value="ECO:0007669"/>
    <property type="project" value="Ensembl"/>
</dbReference>
<dbReference type="GO" id="GO:0006004">
    <property type="term" value="P:fucose metabolic process"/>
    <property type="evidence" value="ECO:0007669"/>
    <property type="project" value="UniProtKB-KW"/>
</dbReference>
<dbReference type="GO" id="GO:0007507">
    <property type="term" value="P:heart development"/>
    <property type="evidence" value="ECO:0007669"/>
    <property type="project" value="Ensembl"/>
</dbReference>
<dbReference type="GO" id="GO:0007399">
    <property type="term" value="P:nervous system development"/>
    <property type="evidence" value="ECO:0007669"/>
    <property type="project" value="Ensembl"/>
</dbReference>
<dbReference type="GO" id="GO:0007219">
    <property type="term" value="P:Notch signaling pathway"/>
    <property type="evidence" value="ECO:0007669"/>
    <property type="project" value="UniProtKB-KW"/>
</dbReference>
<dbReference type="GO" id="GO:0036066">
    <property type="term" value="P:protein O-linked fucosylation"/>
    <property type="evidence" value="ECO:0000250"/>
    <property type="project" value="UniProtKB"/>
</dbReference>
<dbReference type="GO" id="GO:0008593">
    <property type="term" value="P:regulation of Notch signaling pathway"/>
    <property type="evidence" value="ECO:0000250"/>
    <property type="project" value="UniProtKB"/>
</dbReference>
<dbReference type="GO" id="GO:0001756">
    <property type="term" value="P:somitogenesis"/>
    <property type="evidence" value="ECO:0007669"/>
    <property type="project" value="Ensembl"/>
</dbReference>
<dbReference type="CDD" id="cd11302">
    <property type="entry name" value="O-FucT-1"/>
    <property type="match status" value="1"/>
</dbReference>
<dbReference type="FunFam" id="3.40.50.11340:FF:000001">
    <property type="entry name" value="GDP-fucose protein O-fucosyltransferase 1"/>
    <property type="match status" value="1"/>
</dbReference>
<dbReference type="FunFam" id="3.40.50.11350:FF:000004">
    <property type="entry name" value="GDP-fucose protein O-fucosyltransferase 1"/>
    <property type="match status" value="1"/>
</dbReference>
<dbReference type="Gene3D" id="3.40.50.11340">
    <property type="match status" value="1"/>
</dbReference>
<dbReference type="Gene3D" id="3.40.50.11350">
    <property type="match status" value="1"/>
</dbReference>
<dbReference type="InterPro" id="IPR019378">
    <property type="entry name" value="GDP-Fuc_O-FucTrfase"/>
</dbReference>
<dbReference type="InterPro" id="IPR039922">
    <property type="entry name" value="POFUT1"/>
</dbReference>
<dbReference type="PANTHER" id="PTHR21420">
    <property type="entry name" value="GDP-FUCOSE PROTEIN O-FUCOSYLTRANSFERASE 1"/>
    <property type="match status" value="1"/>
</dbReference>
<dbReference type="PANTHER" id="PTHR21420:SF3">
    <property type="entry name" value="GDP-FUCOSE PROTEIN O-FUCOSYLTRANSFERASE 1"/>
    <property type="match status" value="1"/>
</dbReference>
<dbReference type="Pfam" id="PF10250">
    <property type="entry name" value="O-FucT"/>
    <property type="match status" value="1"/>
</dbReference>
<reference key="1">
    <citation type="journal article" date="2003" name="Glycobiology">
        <title>A new superfamily of protein-O-fucosyltransferases, alpha2-fucosyltransferases, and alpha6-fucosyltransferases: phylogeny and identification of conserved peptide motifs.</title>
        <authorList>
            <person name="Martinez-Duncker I."/>
            <person name="Mollicone R."/>
            <person name="Candelier J.-J."/>
            <person name="Breton C."/>
            <person name="Oriol R."/>
        </authorList>
    </citation>
    <scope>NUCLEOTIDE SEQUENCE [MRNA]</scope>
</reference>
<keyword id="KW-0119">Carbohydrate metabolism</keyword>
<keyword id="KW-1015">Disulfide bond</keyword>
<keyword id="KW-0256">Endoplasmic reticulum</keyword>
<keyword id="KW-0294">Fucose metabolism</keyword>
<keyword id="KW-0325">Glycoprotein</keyword>
<keyword id="KW-0328">Glycosyltransferase</keyword>
<keyword id="KW-0464">Manganese</keyword>
<keyword id="KW-0914">Notch signaling pathway</keyword>
<keyword id="KW-1185">Reference proteome</keyword>
<keyword id="KW-0732">Signal</keyword>
<keyword id="KW-0808">Transferase</keyword>
<name>OFUT1_PANTR</name>
<feature type="signal peptide" evidence="4">
    <location>
        <begin position="1"/>
        <end position="26"/>
    </location>
</feature>
<feature type="chain" id="PRO_0000012150" description="GDP-fucose protein O-fucosyltransferase 1">
    <location>
        <begin position="27"/>
        <end position="388"/>
    </location>
</feature>
<feature type="short sequence motif" description="Prevents secretion from ER" evidence="4">
    <location>
        <begin position="385"/>
        <end position="388"/>
    </location>
</feature>
<feature type="binding site" evidence="3">
    <location>
        <begin position="43"/>
        <end position="46"/>
    </location>
    <ligand>
        <name>substrate</name>
    </ligand>
</feature>
<feature type="binding site" evidence="3">
    <location>
        <begin position="238"/>
        <end position="240"/>
    </location>
    <ligand>
        <name>substrate</name>
    </ligand>
</feature>
<feature type="binding site" evidence="3">
    <location>
        <position position="340"/>
    </location>
    <ligand>
        <name>substrate</name>
    </ligand>
</feature>
<feature type="binding site" evidence="3">
    <location>
        <begin position="357"/>
        <end position="358"/>
    </location>
    <ligand>
        <name>substrate</name>
    </ligand>
</feature>
<feature type="glycosylation site" description="N-linked (GlcNAc...) asparagine" evidence="4">
    <location>
        <position position="62"/>
    </location>
</feature>
<feature type="glycosylation site" description="N-linked (GlcNAc...) asparagine" evidence="4">
    <location>
        <position position="160"/>
    </location>
</feature>
<feature type="disulfide bond" evidence="3">
    <location>
        <begin position="38"/>
        <end position="40"/>
    </location>
</feature>
<feature type="disulfide bond" evidence="3">
    <location>
        <begin position="126"/>
        <end position="140"/>
    </location>
</feature>
<feature type="disulfide bond" evidence="3">
    <location>
        <begin position="249"/>
        <end position="283"/>
    </location>
</feature>
<feature type="disulfide bond" evidence="3">
    <location>
        <begin position="267"/>
        <end position="354"/>
    </location>
</feature>
<organism>
    <name type="scientific">Pan troglodytes</name>
    <name type="common">Chimpanzee</name>
    <dbReference type="NCBI Taxonomy" id="9598"/>
    <lineage>
        <taxon>Eukaryota</taxon>
        <taxon>Metazoa</taxon>
        <taxon>Chordata</taxon>
        <taxon>Craniata</taxon>
        <taxon>Vertebrata</taxon>
        <taxon>Euteleostomi</taxon>
        <taxon>Mammalia</taxon>
        <taxon>Eutheria</taxon>
        <taxon>Euarchontoglires</taxon>
        <taxon>Primates</taxon>
        <taxon>Haplorrhini</taxon>
        <taxon>Catarrhini</taxon>
        <taxon>Hominidae</taxon>
        <taxon>Pan</taxon>
    </lineage>
</organism>
<evidence type="ECO:0000250" key="1">
    <source>
        <dbReference type="UniProtKB" id="P83337"/>
    </source>
</evidence>
<evidence type="ECO:0000250" key="2">
    <source>
        <dbReference type="UniProtKB" id="Q6EV70"/>
    </source>
</evidence>
<evidence type="ECO:0000250" key="3">
    <source>
        <dbReference type="UniProtKB" id="Q9H488"/>
    </source>
</evidence>
<evidence type="ECO:0000255" key="4"/>
<evidence type="ECO:0000305" key="5"/>
<comment type="function">
    <text evidence="3">Catalyzes the reaction that attaches fucose through an O-glycosidic linkage to a conserved serine or threonine residue found in the consensus sequence C2-X(4,5)-[S/T]-C3 of EGF domains, where C2 and C3 are the second and third conserved cysteines. Specifically uses GDP-fucose as donor substrate and proper disulfide pairing of the substrate EGF domains is required for fucose transfer. Plays a crucial role in NOTCH signaling. Initial fucosylation of NOTCH by POFUT1 generates a substrate for FRINGE/RFNG, an acetylglucosaminyltransferase that can then extend the fucosylation on the NOTCH EGF repeats. This extended fucosylation is required for optimal ligand binding and canonical NOTCH signaling induced by DLL1 or JAGGED1. Fucosylates AGRN and determines its ability to cluster acetylcholine receptors (AChRs).</text>
</comment>
<comment type="catalytic activity">
    <reaction evidence="3">
        <text>L-seryl-[protein] + GDP-beta-L-fucose = 3-O-(alpha-L-fucosyl)-L-seryl-[protein] + GDP + H(+)</text>
        <dbReference type="Rhea" id="RHEA:63644"/>
        <dbReference type="Rhea" id="RHEA-COMP:9863"/>
        <dbReference type="Rhea" id="RHEA-COMP:17914"/>
        <dbReference type="ChEBI" id="CHEBI:15378"/>
        <dbReference type="ChEBI" id="CHEBI:29999"/>
        <dbReference type="ChEBI" id="CHEBI:57273"/>
        <dbReference type="ChEBI" id="CHEBI:58189"/>
        <dbReference type="ChEBI" id="CHEBI:189632"/>
        <dbReference type="EC" id="2.4.1.221"/>
    </reaction>
    <physiologicalReaction direction="left-to-right" evidence="3">
        <dbReference type="Rhea" id="RHEA:63645"/>
    </physiologicalReaction>
</comment>
<comment type="catalytic activity">
    <reaction evidence="3">
        <text>L-threonyl-[protein] + GDP-beta-L-fucose = 3-O-(alpha-L-fucosyl)-L-threonyl-[protein] + GDP + H(+)</text>
        <dbReference type="Rhea" id="RHEA:70491"/>
        <dbReference type="Rhea" id="RHEA-COMP:11060"/>
        <dbReference type="Rhea" id="RHEA-COMP:17915"/>
        <dbReference type="ChEBI" id="CHEBI:15378"/>
        <dbReference type="ChEBI" id="CHEBI:30013"/>
        <dbReference type="ChEBI" id="CHEBI:57273"/>
        <dbReference type="ChEBI" id="CHEBI:58189"/>
        <dbReference type="ChEBI" id="CHEBI:189631"/>
        <dbReference type="EC" id="2.4.1.221"/>
    </reaction>
    <physiologicalReaction direction="left-to-right" evidence="3">
        <dbReference type="Rhea" id="RHEA:70492"/>
    </physiologicalReaction>
</comment>
<comment type="pathway">
    <text evidence="3">Protein modification; protein glycosylation.</text>
</comment>
<comment type="subcellular location">
    <subcellularLocation>
        <location evidence="2">Endoplasmic reticulum</location>
    </subcellularLocation>
</comment>
<comment type="PTM">
    <text evidence="1">N-glycosylated.</text>
</comment>
<comment type="similarity">
    <text evidence="5">Belongs to the glycosyltransferase 65 family.</text>
</comment>